<sequence length="853" mass="95305">MSAIENFDAHTPMMQQYLRLKAQHPEILLFYRMGDFYELFYDDAKRASQLLDISLTKRGASAGEPIPMAGIPYHAVENYLAKLVNQGESVAICEQIGDPATSKGPVERKVVRIVTPGTISDEALLQERQDNLLAAIWQDSKGFGYATLDISSGRFRLSEPADRETMAAELQRTNPAELLYAEDFAEMSLIEGRRGLRRRPLWEFEIDTARQQLNLQFGTRDLVGFGVENAPRGLCAAGCLLQYAKDTQRTTLPHIRSITMEREQDSIIMDAATRRNLEITQNLAGGAENTLASVLDCTVTPMGSRMLKRWLHMPVRDTRVLLERQQTIGALQDFTAGLQPVLRQVGDLERILARLALRTARPRDLARMRHAFQQLPELRAQLETVDSAPVQALREKMGEFAELRDLLERAIIDTPPVLVRDGGVIASGYNEELDEWRALADGATDYLERLEVRERERTGLDTLKVGFNAVHGYYIQISRGQSHLAPINYMRRQTLKNAERYIIPELKEYEDKVLTSKGKALALEKQLYEELFDLLLPHLEALQQSASALAELDVLVNLAERAYTLNYTCPTFIDKPGIRITEGRHPVVEQVLNEPFIANPLNLSPQRRMLIITGPNMGGKSTYMRQTALIALMAYIGSYVPAQKVEIGPIDRIFTRVGAADDLASGRSTFMVEMTETANILHNATEYSLVLMDEIGRGTSTYDGLSLAWACAENLANKIKALTLFATHYFELTQLPEKMEDVANVHLDALEHGDTIAFMHSVQDGAASKSYGLAVAALAGVPKEVIKRARQKLRELESISPNAAATQVDGTQMSLLSVPEETSPAVEALENLDPDSLTPRQALEWIYRLKSLV</sequence>
<comment type="function">
    <text evidence="1">This protein is involved in the repair of mismatches in DNA. It is possible that it carries out the mismatch recognition step. This protein has a weak ATPase activity.</text>
</comment>
<comment type="similarity">
    <text evidence="1">Belongs to the DNA mismatch repair MutS family.</text>
</comment>
<evidence type="ECO:0000255" key="1">
    <source>
        <dbReference type="HAMAP-Rule" id="MF_00096"/>
    </source>
</evidence>
<gene>
    <name evidence="1" type="primary">mutS</name>
    <name type="ordered locus">SbBS512_E3143</name>
</gene>
<reference key="1">
    <citation type="submission" date="2008-05" db="EMBL/GenBank/DDBJ databases">
        <title>Complete sequence of Shigella boydii serotype 18 strain BS512.</title>
        <authorList>
            <person name="Rasko D.A."/>
            <person name="Rosovitz M."/>
            <person name="Maurelli A.T."/>
            <person name="Myers G."/>
            <person name="Seshadri R."/>
            <person name="Cer R."/>
            <person name="Jiang L."/>
            <person name="Ravel J."/>
            <person name="Sebastian Y."/>
        </authorList>
    </citation>
    <scope>NUCLEOTIDE SEQUENCE [LARGE SCALE GENOMIC DNA]</scope>
    <source>
        <strain>CDC 3083-94 / BS512</strain>
    </source>
</reference>
<keyword id="KW-0067">ATP-binding</keyword>
<keyword id="KW-0227">DNA damage</keyword>
<keyword id="KW-0234">DNA repair</keyword>
<keyword id="KW-0238">DNA-binding</keyword>
<keyword id="KW-0547">Nucleotide-binding</keyword>
<keyword id="KW-1185">Reference proteome</keyword>
<organism>
    <name type="scientific">Shigella boydii serotype 18 (strain CDC 3083-94 / BS512)</name>
    <dbReference type="NCBI Taxonomy" id="344609"/>
    <lineage>
        <taxon>Bacteria</taxon>
        <taxon>Pseudomonadati</taxon>
        <taxon>Pseudomonadota</taxon>
        <taxon>Gammaproteobacteria</taxon>
        <taxon>Enterobacterales</taxon>
        <taxon>Enterobacteriaceae</taxon>
        <taxon>Shigella</taxon>
    </lineage>
</organism>
<protein>
    <recommendedName>
        <fullName evidence="1">DNA mismatch repair protein MutS</fullName>
    </recommendedName>
</protein>
<dbReference type="EMBL" id="CP001063">
    <property type="protein sequence ID" value="ACD10514.1"/>
    <property type="molecule type" value="Genomic_DNA"/>
</dbReference>
<dbReference type="RefSeq" id="WP_001272926.1">
    <property type="nucleotide sequence ID" value="NC_010658.1"/>
</dbReference>
<dbReference type="SMR" id="B2TZJ7"/>
<dbReference type="STRING" id="344609.SbBS512_E3143"/>
<dbReference type="KEGG" id="sbc:SbBS512_E3143"/>
<dbReference type="HOGENOM" id="CLU_002472_4_0_6"/>
<dbReference type="Proteomes" id="UP000001030">
    <property type="component" value="Chromosome"/>
</dbReference>
<dbReference type="GO" id="GO:0005829">
    <property type="term" value="C:cytosol"/>
    <property type="evidence" value="ECO:0007669"/>
    <property type="project" value="TreeGrafter"/>
</dbReference>
<dbReference type="GO" id="GO:0005524">
    <property type="term" value="F:ATP binding"/>
    <property type="evidence" value="ECO:0007669"/>
    <property type="project" value="UniProtKB-UniRule"/>
</dbReference>
<dbReference type="GO" id="GO:0140664">
    <property type="term" value="F:ATP-dependent DNA damage sensor activity"/>
    <property type="evidence" value="ECO:0007669"/>
    <property type="project" value="InterPro"/>
</dbReference>
<dbReference type="GO" id="GO:0003684">
    <property type="term" value="F:damaged DNA binding"/>
    <property type="evidence" value="ECO:0007669"/>
    <property type="project" value="UniProtKB-UniRule"/>
</dbReference>
<dbReference type="GO" id="GO:0030983">
    <property type="term" value="F:mismatched DNA binding"/>
    <property type="evidence" value="ECO:0007669"/>
    <property type="project" value="InterPro"/>
</dbReference>
<dbReference type="GO" id="GO:0006298">
    <property type="term" value="P:mismatch repair"/>
    <property type="evidence" value="ECO:0007669"/>
    <property type="project" value="UniProtKB-UniRule"/>
</dbReference>
<dbReference type="CDD" id="cd03284">
    <property type="entry name" value="ABC_MutS1"/>
    <property type="match status" value="1"/>
</dbReference>
<dbReference type="FunFam" id="1.10.1420.10:FF:000002">
    <property type="entry name" value="DNA mismatch repair protein MutS"/>
    <property type="match status" value="1"/>
</dbReference>
<dbReference type="FunFam" id="3.30.420.110:FF:000001">
    <property type="entry name" value="DNA mismatch repair protein MutS"/>
    <property type="match status" value="1"/>
</dbReference>
<dbReference type="FunFam" id="3.40.1170.10:FF:000001">
    <property type="entry name" value="DNA mismatch repair protein MutS"/>
    <property type="match status" value="1"/>
</dbReference>
<dbReference type="FunFam" id="3.40.50.300:FF:000283">
    <property type="entry name" value="DNA mismatch repair protein MutS"/>
    <property type="match status" value="1"/>
</dbReference>
<dbReference type="Gene3D" id="1.10.1420.10">
    <property type="match status" value="2"/>
</dbReference>
<dbReference type="Gene3D" id="6.10.140.430">
    <property type="match status" value="1"/>
</dbReference>
<dbReference type="Gene3D" id="3.40.1170.10">
    <property type="entry name" value="DNA repair protein MutS, domain I"/>
    <property type="match status" value="1"/>
</dbReference>
<dbReference type="Gene3D" id="3.30.420.110">
    <property type="entry name" value="MutS, connector domain"/>
    <property type="match status" value="1"/>
</dbReference>
<dbReference type="Gene3D" id="3.40.50.300">
    <property type="entry name" value="P-loop containing nucleotide triphosphate hydrolases"/>
    <property type="match status" value="1"/>
</dbReference>
<dbReference type="HAMAP" id="MF_00096">
    <property type="entry name" value="MutS"/>
    <property type="match status" value="1"/>
</dbReference>
<dbReference type="InterPro" id="IPR005748">
    <property type="entry name" value="DNA_mismatch_repair_MutS"/>
</dbReference>
<dbReference type="InterPro" id="IPR007695">
    <property type="entry name" value="DNA_mismatch_repair_MutS-lik_N"/>
</dbReference>
<dbReference type="InterPro" id="IPR017261">
    <property type="entry name" value="DNA_mismatch_repair_MutS/MSH"/>
</dbReference>
<dbReference type="InterPro" id="IPR000432">
    <property type="entry name" value="DNA_mismatch_repair_MutS_C"/>
</dbReference>
<dbReference type="InterPro" id="IPR007861">
    <property type="entry name" value="DNA_mismatch_repair_MutS_clamp"/>
</dbReference>
<dbReference type="InterPro" id="IPR007696">
    <property type="entry name" value="DNA_mismatch_repair_MutS_core"/>
</dbReference>
<dbReference type="InterPro" id="IPR016151">
    <property type="entry name" value="DNA_mismatch_repair_MutS_N"/>
</dbReference>
<dbReference type="InterPro" id="IPR036187">
    <property type="entry name" value="DNA_mismatch_repair_MutS_sf"/>
</dbReference>
<dbReference type="InterPro" id="IPR007860">
    <property type="entry name" value="DNA_mmatch_repair_MutS_con_dom"/>
</dbReference>
<dbReference type="InterPro" id="IPR045076">
    <property type="entry name" value="MutS"/>
</dbReference>
<dbReference type="InterPro" id="IPR036678">
    <property type="entry name" value="MutS_con_dom_sf"/>
</dbReference>
<dbReference type="InterPro" id="IPR027417">
    <property type="entry name" value="P-loop_NTPase"/>
</dbReference>
<dbReference type="NCBIfam" id="TIGR01070">
    <property type="entry name" value="mutS1"/>
    <property type="match status" value="1"/>
</dbReference>
<dbReference type="NCBIfam" id="NF003810">
    <property type="entry name" value="PRK05399.1"/>
    <property type="match status" value="1"/>
</dbReference>
<dbReference type="PANTHER" id="PTHR11361:SF34">
    <property type="entry name" value="DNA MISMATCH REPAIR PROTEIN MSH1, MITOCHONDRIAL"/>
    <property type="match status" value="1"/>
</dbReference>
<dbReference type="PANTHER" id="PTHR11361">
    <property type="entry name" value="DNA MISMATCH REPAIR PROTEIN MUTS FAMILY MEMBER"/>
    <property type="match status" value="1"/>
</dbReference>
<dbReference type="Pfam" id="PF01624">
    <property type="entry name" value="MutS_I"/>
    <property type="match status" value="1"/>
</dbReference>
<dbReference type="Pfam" id="PF05188">
    <property type="entry name" value="MutS_II"/>
    <property type="match status" value="1"/>
</dbReference>
<dbReference type="Pfam" id="PF05192">
    <property type="entry name" value="MutS_III"/>
    <property type="match status" value="1"/>
</dbReference>
<dbReference type="Pfam" id="PF05190">
    <property type="entry name" value="MutS_IV"/>
    <property type="match status" value="1"/>
</dbReference>
<dbReference type="Pfam" id="PF00488">
    <property type="entry name" value="MutS_V"/>
    <property type="match status" value="1"/>
</dbReference>
<dbReference type="PIRSF" id="PIRSF037677">
    <property type="entry name" value="DNA_mis_repair_Msh6"/>
    <property type="match status" value="1"/>
</dbReference>
<dbReference type="SMART" id="SM00534">
    <property type="entry name" value="MUTSac"/>
    <property type="match status" value="1"/>
</dbReference>
<dbReference type="SMART" id="SM00533">
    <property type="entry name" value="MUTSd"/>
    <property type="match status" value="1"/>
</dbReference>
<dbReference type="SUPFAM" id="SSF55271">
    <property type="entry name" value="DNA repair protein MutS, domain I"/>
    <property type="match status" value="1"/>
</dbReference>
<dbReference type="SUPFAM" id="SSF53150">
    <property type="entry name" value="DNA repair protein MutS, domain II"/>
    <property type="match status" value="1"/>
</dbReference>
<dbReference type="SUPFAM" id="SSF48334">
    <property type="entry name" value="DNA repair protein MutS, domain III"/>
    <property type="match status" value="1"/>
</dbReference>
<dbReference type="SUPFAM" id="SSF52540">
    <property type="entry name" value="P-loop containing nucleoside triphosphate hydrolases"/>
    <property type="match status" value="1"/>
</dbReference>
<dbReference type="PROSITE" id="PS00486">
    <property type="entry name" value="DNA_MISMATCH_REPAIR_2"/>
    <property type="match status" value="1"/>
</dbReference>
<proteinExistence type="inferred from homology"/>
<feature type="chain" id="PRO_1000093647" description="DNA mismatch repair protein MutS">
    <location>
        <begin position="1"/>
        <end position="853"/>
    </location>
</feature>
<feature type="binding site" evidence="1">
    <location>
        <begin position="614"/>
        <end position="621"/>
    </location>
    <ligand>
        <name>ATP</name>
        <dbReference type="ChEBI" id="CHEBI:30616"/>
    </ligand>
</feature>
<accession>B2TZJ7</accession>
<name>MUTS_SHIB3</name>